<proteinExistence type="inferred from homology"/>
<gene>
    <name evidence="1" type="primary">eno</name>
    <name type="ordered locus">Saro_2223</name>
</gene>
<accession>Q2G662</accession>
<organism>
    <name type="scientific">Novosphingobium aromaticivorans (strain ATCC 700278 / DSM 12444 / CCUG 56034 / CIP 105152 / NBRC 16084 / F199)</name>
    <dbReference type="NCBI Taxonomy" id="279238"/>
    <lineage>
        <taxon>Bacteria</taxon>
        <taxon>Pseudomonadati</taxon>
        <taxon>Pseudomonadota</taxon>
        <taxon>Alphaproteobacteria</taxon>
        <taxon>Sphingomonadales</taxon>
        <taxon>Sphingomonadaceae</taxon>
        <taxon>Novosphingobium</taxon>
    </lineage>
</organism>
<feature type="chain" id="PRO_0000267067" description="Enolase">
    <location>
        <begin position="1"/>
        <end position="428"/>
    </location>
</feature>
<feature type="active site" description="Proton donor" evidence="1">
    <location>
        <position position="205"/>
    </location>
</feature>
<feature type="active site" description="Proton acceptor" evidence="1">
    <location>
        <position position="337"/>
    </location>
</feature>
<feature type="binding site" evidence="1">
    <location>
        <position position="163"/>
    </location>
    <ligand>
        <name>(2R)-2-phosphoglycerate</name>
        <dbReference type="ChEBI" id="CHEBI:58289"/>
    </ligand>
</feature>
<feature type="binding site" evidence="1">
    <location>
        <position position="242"/>
    </location>
    <ligand>
        <name>Mg(2+)</name>
        <dbReference type="ChEBI" id="CHEBI:18420"/>
    </ligand>
</feature>
<feature type="binding site" evidence="1">
    <location>
        <position position="285"/>
    </location>
    <ligand>
        <name>Mg(2+)</name>
        <dbReference type="ChEBI" id="CHEBI:18420"/>
    </ligand>
</feature>
<feature type="binding site" evidence="1">
    <location>
        <position position="312"/>
    </location>
    <ligand>
        <name>Mg(2+)</name>
        <dbReference type="ChEBI" id="CHEBI:18420"/>
    </ligand>
</feature>
<feature type="binding site" evidence="1">
    <location>
        <position position="337"/>
    </location>
    <ligand>
        <name>(2R)-2-phosphoglycerate</name>
        <dbReference type="ChEBI" id="CHEBI:58289"/>
    </ligand>
</feature>
<feature type="binding site" evidence="1">
    <location>
        <position position="366"/>
    </location>
    <ligand>
        <name>(2R)-2-phosphoglycerate</name>
        <dbReference type="ChEBI" id="CHEBI:58289"/>
    </ligand>
</feature>
<feature type="binding site" evidence="1">
    <location>
        <position position="367"/>
    </location>
    <ligand>
        <name>(2R)-2-phosphoglycerate</name>
        <dbReference type="ChEBI" id="CHEBI:58289"/>
    </ligand>
</feature>
<feature type="binding site" evidence="1">
    <location>
        <position position="388"/>
    </location>
    <ligand>
        <name>(2R)-2-phosphoglycerate</name>
        <dbReference type="ChEBI" id="CHEBI:58289"/>
    </ligand>
</feature>
<name>ENO_NOVAD</name>
<comment type="function">
    <text evidence="1">Catalyzes the reversible conversion of 2-phosphoglycerate (2-PG) into phosphoenolpyruvate (PEP). It is essential for the degradation of carbohydrates via glycolysis.</text>
</comment>
<comment type="catalytic activity">
    <reaction evidence="1">
        <text>(2R)-2-phosphoglycerate = phosphoenolpyruvate + H2O</text>
        <dbReference type="Rhea" id="RHEA:10164"/>
        <dbReference type="ChEBI" id="CHEBI:15377"/>
        <dbReference type="ChEBI" id="CHEBI:58289"/>
        <dbReference type="ChEBI" id="CHEBI:58702"/>
        <dbReference type="EC" id="4.2.1.11"/>
    </reaction>
</comment>
<comment type="cofactor">
    <cofactor evidence="1">
        <name>Mg(2+)</name>
        <dbReference type="ChEBI" id="CHEBI:18420"/>
    </cofactor>
    <text evidence="1">Binds a second Mg(2+) ion via substrate during catalysis.</text>
</comment>
<comment type="pathway">
    <text evidence="1">Carbohydrate degradation; glycolysis; pyruvate from D-glyceraldehyde 3-phosphate: step 4/5.</text>
</comment>
<comment type="subcellular location">
    <subcellularLocation>
        <location evidence="1">Cytoplasm</location>
    </subcellularLocation>
    <subcellularLocation>
        <location evidence="1">Secreted</location>
    </subcellularLocation>
    <subcellularLocation>
        <location evidence="1">Cell surface</location>
    </subcellularLocation>
    <text evidence="1">Fractions of enolase are present in both the cytoplasm and on the cell surface.</text>
</comment>
<comment type="similarity">
    <text evidence="1">Belongs to the enolase family.</text>
</comment>
<sequence length="428" mass="45064">MTAIIDIHAREILDSRGNPTVEVDVLLEDGSFGRAAVPSGASTGAHEAVELRDGDKARYLGKGVTKAVTAVNSDIAECILGLDAEDQRDIDLAMIELDGTENKSRLGANAILGTSLAVAKAAADARGLPLYSYVGGVSAHVLPVPMMNIINGGEHADNPIDFQEFMIMPVGAPSLAEAVRWGAEVFHTLKKGLHEKGLATAVGDEGGFAPNLASTRDALDFVMASIEKAGFKPGEDMMLALDCAATEFFKNGKYEISGEGLSLSPDAMADYLAALCDAYPIISIEDGMGEDDFEGWAALTAKVGKRVQLVGDDLFVTNPKRLEMGIGKGLANSLLVKVNQIGSLTETLEAVSIAQRNGYTAVMSHRSGETEDATIADLAVATNCGQIKTGSLARSDRLAKYNQLIRIEEELGVSARYAGKTAFGRLGA</sequence>
<evidence type="ECO:0000255" key="1">
    <source>
        <dbReference type="HAMAP-Rule" id="MF_00318"/>
    </source>
</evidence>
<protein>
    <recommendedName>
        <fullName evidence="1">Enolase</fullName>
        <ecNumber evidence="1">4.2.1.11</ecNumber>
    </recommendedName>
    <alternativeName>
        <fullName evidence="1">2-phospho-D-glycerate hydro-lyase</fullName>
    </alternativeName>
    <alternativeName>
        <fullName evidence="1">2-phosphoglycerate dehydratase</fullName>
    </alternativeName>
</protein>
<reference key="1">
    <citation type="submission" date="2006-01" db="EMBL/GenBank/DDBJ databases">
        <title>Complete sequence of Novosphingobium aromaticivorans DSM 12444.</title>
        <authorList>
            <consortium name="US DOE Joint Genome Institute"/>
            <person name="Copeland A."/>
            <person name="Lucas S."/>
            <person name="Lapidus A."/>
            <person name="Barry K."/>
            <person name="Detter J.C."/>
            <person name="Glavina T."/>
            <person name="Hammon N."/>
            <person name="Israni S."/>
            <person name="Pitluck S."/>
            <person name="Chain P."/>
            <person name="Malfatti S."/>
            <person name="Shin M."/>
            <person name="Vergez L."/>
            <person name="Schmutz J."/>
            <person name="Larimer F."/>
            <person name="Land M."/>
            <person name="Kyrpides N."/>
            <person name="Ivanova N."/>
            <person name="Fredrickson J."/>
            <person name="Balkwill D."/>
            <person name="Romine M.F."/>
            <person name="Richardson P."/>
        </authorList>
    </citation>
    <scope>NUCLEOTIDE SEQUENCE [LARGE SCALE GENOMIC DNA]</scope>
    <source>
        <strain>ATCC 700278 / DSM 12444 / CCUG 56034 / CIP 105152 / NBRC 16084 / F199</strain>
    </source>
</reference>
<keyword id="KW-0963">Cytoplasm</keyword>
<keyword id="KW-0324">Glycolysis</keyword>
<keyword id="KW-0456">Lyase</keyword>
<keyword id="KW-0460">Magnesium</keyword>
<keyword id="KW-0479">Metal-binding</keyword>
<keyword id="KW-1185">Reference proteome</keyword>
<keyword id="KW-0964">Secreted</keyword>
<dbReference type="EC" id="4.2.1.11" evidence="1"/>
<dbReference type="EMBL" id="CP000248">
    <property type="protein sequence ID" value="ABD26661.1"/>
    <property type="molecule type" value="Genomic_DNA"/>
</dbReference>
<dbReference type="RefSeq" id="WP_011445867.1">
    <property type="nucleotide sequence ID" value="NC_007794.1"/>
</dbReference>
<dbReference type="SMR" id="Q2G662"/>
<dbReference type="STRING" id="279238.Saro_2223"/>
<dbReference type="KEGG" id="nar:Saro_2223"/>
<dbReference type="eggNOG" id="COG0148">
    <property type="taxonomic scope" value="Bacteria"/>
</dbReference>
<dbReference type="HOGENOM" id="CLU_031223_2_1_5"/>
<dbReference type="UniPathway" id="UPA00109">
    <property type="reaction ID" value="UER00187"/>
</dbReference>
<dbReference type="Proteomes" id="UP000009134">
    <property type="component" value="Chromosome"/>
</dbReference>
<dbReference type="GO" id="GO:0009986">
    <property type="term" value="C:cell surface"/>
    <property type="evidence" value="ECO:0007669"/>
    <property type="project" value="UniProtKB-SubCell"/>
</dbReference>
<dbReference type="GO" id="GO:0005576">
    <property type="term" value="C:extracellular region"/>
    <property type="evidence" value="ECO:0007669"/>
    <property type="project" value="UniProtKB-SubCell"/>
</dbReference>
<dbReference type="GO" id="GO:0000015">
    <property type="term" value="C:phosphopyruvate hydratase complex"/>
    <property type="evidence" value="ECO:0007669"/>
    <property type="project" value="InterPro"/>
</dbReference>
<dbReference type="GO" id="GO:0000287">
    <property type="term" value="F:magnesium ion binding"/>
    <property type="evidence" value="ECO:0007669"/>
    <property type="project" value="UniProtKB-UniRule"/>
</dbReference>
<dbReference type="GO" id="GO:0004634">
    <property type="term" value="F:phosphopyruvate hydratase activity"/>
    <property type="evidence" value="ECO:0007669"/>
    <property type="project" value="UniProtKB-UniRule"/>
</dbReference>
<dbReference type="GO" id="GO:0006096">
    <property type="term" value="P:glycolytic process"/>
    <property type="evidence" value="ECO:0007669"/>
    <property type="project" value="UniProtKB-UniRule"/>
</dbReference>
<dbReference type="CDD" id="cd03313">
    <property type="entry name" value="enolase"/>
    <property type="match status" value="1"/>
</dbReference>
<dbReference type="FunFam" id="3.20.20.120:FF:000001">
    <property type="entry name" value="Enolase"/>
    <property type="match status" value="1"/>
</dbReference>
<dbReference type="FunFam" id="3.30.390.10:FF:000001">
    <property type="entry name" value="Enolase"/>
    <property type="match status" value="1"/>
</dbReference>
<dbReference type="Gene3D" id="3.20.20.120">
    <property type="entry name" value="Enolase-like C-terminal domain"/>
    <property type="match status" value="1"/>
</dbReference>
<dbReference type="Gene3D" id="3.30.390.10">
    <property type="entry name" value="Enolase-like, N-terminal domain"/>
    <property type="match status" value="1"/>
</dbReference>
<dbReference type="HAMAP" id="MF_00318">
    <property type="entry name" value="Enolase"/>
    <property type="match status" value="1"/>
</dbReference>
<dbReference type="InterPro" id="IPR000941">
    <property type="entry name" value="Enolase"/>
</dbReference>
<dbReference type="InterPro" id="IPR036849">
    <property type="entry name" value="Enolase-like_C_sf"/>
</dbReference>
<dbReference type="InterPro" id="IPR029017">
    <property type="entry name" value="Enolase-like_N"/>
</dbReference>
<dbReference type="InterPro" id="IPR020810">
    <property type="entry name" value="Enolase_C"/>
</dbReference>
<dbReference type="InterPro" id="IPR020809">
    <property type="entry name" value="Enolase_CS"/>
</dbReference>
<dbReference type="InterPro" id="IPR020811">
    <property type="entry name" value="Enolase_N"/>
</dbReference>
<dbReference type="NCBIfam" id="TIGR01060">
    <property type="entry name" value="eno"/>
    <property type="match status" value="1"/>
</dbReference>
<dbReference type="PANTHER" id="PTHR11902">
    <property type="entry name" value="ENOLASE"/>
    <property type="match status" value="1"/>
</dbReference>
<dbReference type="PANTHER" id="PTHR11902:SF1">
    <property type="entry name" value="ENOLASE"/>
    <property type="match status" value="1"/>
</dbReference>
<dbReference type="Pfam" id="PF00113">
    <property type="entry name" value="Enolase_C"/>
    <property type="match status" value="1"/>
</dbReference>
<dbReference type="Pfam" id="PF03952">
    <property type="entry name" value="Enolase_N"/>
    <property type="match status" value="1"/>
</dbReference>
<dbReference type="PIRSF" id="PIRSF001400">
    <property type="entry name" value="Enolase"/>
    <property type="match status" value="1"/>
</dbReference>
<dbReference type="PRINTS" id="PR00148">
    <property type="entry name" value="ENOLASE"/>
</dbReference>
<dbReference type="SFLD" id="SFLDF00002">
    <property type="entry name" value="enolase"/>
    <property type="match status" value="1"/>
</dbReference>
<dbReference type="SFLD" id="SFLDG00178">
    <property type="entry name" value="enolase"/>
    <property type="match status" value="1"/>
</dbReference>
<dbReference type="SMART" id="SM01192">
    <property type="entry name" value="Enolase_C"/>
    <property type="match status" value="1"/>
</dbReference>
<dbReference type="SMART" id="SM01193">
    <property type="entry name" value="Enolase_N"/>
    <property type="match status" value="1"/>
</dbReference>
<dbReference type="SUPFAM" id="SSF51604">
    <property type="entry name" value="Enolase C-terminal domain-like"/>
    <property type="match status" value="1"/>
</dbReference>
<dbReference type="SUPFAM" id="SSF54826">
    <property type="entry name" value="Enolase N-terminal domain-like"/>
    <property type="match status" value="1"/>
</dbReference>
<dbReference type="PROSITE" id="PS00164">
    <property type="entry name" value="ENOLASE"/>
    <property type="match status" value="1"/>
</dbReference>